<reference key="1">
    <citation type="journal article" date="2004" name="J. Plant Res.">
        <title>Molecular phylogeny of monocotyledons inferred from combined analysis of plastid matK and rbcL gene sequences.</title>
        <authorList>
            <person name="Tamura M.N."/>
            <person name="Yamashita J."/>
            <person name="Fuse S."/>
            <person name="Haraguchi M."/>
        </authorList>
    </citation>
    <scope>NUCLEOTIDE SEQUENCE [GENOMIC DNA]</scope>
</reference>
<proteinExistence type="inferred from homology"/>
<dbReference type="EMBL" id="AB088803">
    <property type="protein sequence ID" value="BAD20597.1"/>
    <property type="molecule type" value="Genomic_DNA"/>
</dbReference>
<dbReference type="GO" id="GO:0009507">
    <property type="term" value="C:chloroplast"/>
    <property type="evidence" value="ECO:0007669"/>
    <property type="project" value="UniProtKB-SubCell"/>
</dbReference>
<dbReference type="GO" id="GO:0003723">
    <property type="term" value="F:RNA binding"/>
    <property type="evidence" value="ECO:0007669"/>
    <property type="project" value="UniProtKB-KW"/>
</dbReference>
<dbReference type="GO" id="GO:0006397">
    <property type="term" value="P:mRNA processing"/>
    <property type="evidence" value="ECO:0007669"/>
    <property type="project" value="UniProtKB-KW"/>
</dbReference>
<dbReference type="GO" id="GO:0008380">
    <property type="term" value="P:RNA splicing"/>
    <property type="evidence" value="ECO:0007669"/>
    <property type="project" value="UniProtKB-UniRule"/>
</dbReference>
<dbReference type="GO" id="GO:0008033">
    <property type="term" value="P:tRNA processing"/>
    <property type="evidence" value="ECO:0007669"/>
    <property type="project" value="UniProtKB-KW"/>
</dbReference>
<dbReference type="HAMAP" id="MF_01390">
    <property type="entry name" value="MatK"/>
    <property type="match status" value="1"/>
</dbReference>
<dbReference type="InterPro" id="IPR024937">
    <property type="entry name" value="Domain_X"/>
</dbReference>
<dbReference type="InterPro" id="IPR002866">
    <property type="entry name" value="Maturase_MatK"/>
</dbReference>
<dbReference type="InterPro" id="IPR024942">
    <property type="entry name" value="Maturase_MatK_N"/>
</dbReference>
<dbReference type="PANTHER" id="PTHR34811">
    <property type="entry name" value="MATURASE K"/>
    <property type="match status" value="1"/>
</dbReference>
<dbReference type="PANTHER" id="PTHR34811:SF1">
    <property type="entry name" value="MATURASE K"/>
    <property type="match status" value="1"/>
</dbReference>
<dbReference type="Pfam" id="PF01348">
    <property type="entry name" value="Intron_maturas2"/>
    <property type="match status" value="1"/>
</dbReference>
<dbReference type="Pfam" id="PF01824">
    <property type="entry name" value="MatK_N"/>
    <property type="match status" value="1"/>
</dbReference>
<accession>Q6LA04</accession>
<protein>
    <recommendedName>
        <fullName evidence="1">Maturase K</fullName>
    </recommendedName>
    <alternativeName>
        <fullName evidence="1">Intron maturase</fullName>
    </alternativeName>
</protein>
<geneLocation type="chloroplast"/>
<feature type="chain" id="PRO_0000143442" description="Maturase K">
    <location>
        <begin position="1"/>
        <end position="517"/>
    </location>
</feature>
<gene>
    <name evidence="1" type="primary">matK</name>
</gene>
<evidence type="ECO:0000255" key="1">
    <source>
        <dbReference type="HAMAP-Rule" id="MF_01390"/>
    </source>
</evidence>
<comment type="function">
    <text evidence="1">Usually encoded in the trnK tRNA gene intron. Probably assists in splicing its own and other chloroplast group II introns.</text>
</comment>
<comment type="subcellular location">
    <subcellularLocation>
        <location>Plastid</location>
        <location>Chloroplast</location>
    </subcellularLocation>
</comment>
<comment type="similarity">
    <text evidence="1">Belongs to the intron maturase 2 family. MatK subfamily.</text>
</comment>
<sequence>MENFQGYLEKYEFCQHQCLYPLLFQEYIYALAYDYDLNTCLFSESVDELISYDNKYSSVLVKRLITRMYQQNYLINSVNHSKFNSFIANNHFFYSHFYSQMISEGFGIILEIPFSLEFLSFSKRKKRLKLQNLRSIHSIFSFLEDKLLXFHXMSDILIPYPIHFEILIQILQYWIQDISFLHLVRFFFFEYLNWNTLITSKNWVSIFLKENQRLFRFLYNSYVSEYEFVFLFLSTKSSYLRFTSFGIFLERIYFYGKIKHFRIVYVTSLQRTLWFFTDSFIHYVRYQGKAILSSRGTFLLMKKWKSYLVCFWQYYFHFWFQPNRILINQFFNYSFYFFGYLLSLKKNHLVVRGQILENSVLIDTMNNQLDTIVPVIXLIRSLSIATFXTXSGHPISKPIWADLSDRDILTRFGRISRNLFHYYSGSSKKWGLYRIKFILRLSCARTLARKHKSTVRTFMQKLGGMFLEEFFTEEEQVLSLVFQKIIHFSLHRSNRERIWYLDIIRINDLVNYFELRS</sequence>
<organism>
    <name type="scientific">Juncus effusus</name>
    <name type="common">Soft rush</name>
    <dbReference type="NCBI Taxonomy" id="13579"/>
    <lineage>
        <taxon>Eukaryota</taxon>
        <taxon>Viridiplantae</taxon>
        <taxon>Streptophyta</taxon>
        <taxon>Embryophyta</taxon>
        <taxon>Tracheophyta</taxon>
        <taxon>Spermatophyta</taxon>
        <taxon>Magnoliopsida</taxon>
        <taxon>Liliopsida</taxon>
        <taxon>Poales</taxon>
        <taxon>Juncaceae</taxon>
        <taxon>Juncus</taxon>
    </lineage>
</organism>
<name>MATK_JUNEF</name>
<keyword id="KW-0150">Chloroplast</keyword>
<keyword id="KW-0507">mRNA processing</keyword>
<keyword id="KW-0934">Plastid</keyword>
<keyword id="KW-0694">RNA-binding</keyword>
<keyword id="KW-0819">tRNA processing</keyword>